<keyword id="KW-0012">Acyltransferase</keyword>
<keyword id="KW-1185">Reference proteome</keyword>
<keyword id="KW-0808">Transferase</keyword>
<organism>
    <name type="scientific">Aspergillus oryzae (strain ATCC 42149 / RIB 40)</name>
    <name type="common">Yellow koji mold</name>
    <dbReference type="NCBI Taxonomy" id="510516"/>
    <lineage>
        <taxon>Eukaryota</taxon>
        <taxon>Fungi</taxon>
        <taxon>Dikarya</taxon>
        <taxon>Ascomycota</taxon>
        <taxon>Pezizomycotina</taxon>
        <taxon>Eurotiomycetes</taxon>
        <taxon>Eurotiomycetidae</taxon>
        <taxon>Eurotiales</taxon>
        <taxon>Aspergillaceae</taxon>
        <taxon>Aspergillus</taxon>
        <taxon>Aspergillus subgen. Circumdati</taxon>
    </lineage>
</organism>
<evidence type="ECO:0000250" key="1">
    <source>
        <dbReference type="UniProtKB" id="Q4WZ64"/>
    </source>
</evidence>
<evidence type="ECO:0000269" key="2">
    <source>
    </source>
</evidence>
<evidence type="ECO:0000303" key="3">
    <source>
    </source>
</evidence>
<evidence type="ECO:0000305" key="4"/>
<gene>
    <name evidence="3" type="primary">astGA</name>
    <name type="ORF">AO090026000578</name>
</gene>
<comment type="function">
    <text evidence="2">O-acetyltransferase; part of the gene cluster that mediates the biosynthesis of astellolides, drimane-type sesquiterpene esters that show antimicrobial, anti-inflammatory, and anti-tumor activities (PubMed:27628599). The first step in astellolide biosynthesis is performed by the sesquiterpene cyclase astC that catalyzes the formation of drimanyl pyrophosphate from farnesyl pyrophosphate (PubMed:27628599). Drimanyl pyrophosphate is then dephosphorylated by the sesquiterpene phosphatase astI to produce drimanyl monophosphate which is further dephosphorylated to drim-8-ene-11-ol by atsK (PubMed:27628599). Drim-8-ene-11-ol is converted to confertifolin, probably by the cytochrome P450 monooxygenase astD and/or the dehydrogenase astE (PubMed:27628599). The cytochrome P450 monooxygenases astB, astF and astJ then hydroxylate confertifolin at C6, C14, or C15 to form trihydroxy confertifolin (PubMed:27628599). The nonribosomal peptide synthetase astA catalyzes ester bond formation between trihydroxy contifolin and benzoic acid (BA) or 4-hydroxy benzoic acid (4HBA), leading to the formation of dideacetyl astellolides A and B, respectively (PubMed:27628599). Finally, the O-acetyltransferase astG converts dideacetyl astellolides A and B into deacetyl astellolides A and B (PubMed:27628599).</text>
</comment>
<comment type="catalytic activity">
    <reaction evidence="2">
        <text>dideacetyl astellolide A + acetyl-CoA = 14-deacetyl astellolide A + CoA</text>
        <dbReference type="Rhea" id="RHEA:81075"/>
        <dbReference type="ChEBI" id="CHEBI:57287"/>
        <dbReference type="ChEBI" id="CHEBI:57288"/>
        <dbReference type="ChEBI" id="CHEBI:149667"/>
        <dbReference type="ChEBI" id="CHEBI:231786"/>
    </reaction>
    <physiologicalReaction direction="left-to-right" evidence="2">
        <dbReference type="Rhea" id="RHEA:81076"/>
    </physiologicalReaction>
</comment>
<comment type="catalytic activity">
    <reaction evidence="2">
        <text>dideacetyl astellolide B + acetyl-CoA = 14-deacetyl astellolide B + CoA</text>
        <dbReference type="Rhea" id="RHEA:81079"/>
        <dbReference type="ChEBI" id="CHEBI:57287"/>
        <dbReference type="ChEBI" id="CHEBI:57288"/>
        <dbReference type="ChEBI" id="CHEBI:149668"/>
        <dbReference type="ChEBI" id="CHEBI:231785"/>
    </reaction>
    <physiologicalReaction direction="left-to-right" evidence="2">
        <dbReference type="Rhea" id="RHEA:81080"/>
    </physiologicalReaction>
</comment>
<comment type="pathway">
    <text evidence="2">Secondary metabolite biosynthesis; terpenoid biosynthesis.</text>
</comment>
<comment type="subunit">
    <text evidence="1">Monomer.</text>
</comment>
<comment type="induction">
    <text evidence="2">Expression is regulated by the secondary metabolite regulator cclA.</text>
</comment>
<comment type="disruption phenotype">
    <text evidence="2">Impairs the production of deacetyl astellolides A and B and leads to the accumulation of dideacetyl astellolides A and B.</text>
</comment>
<comment type="similarity">
    <text evidence="4">Belongs to the fumigaclavine B O-acetyltransferase family.</text>
</comment>
<sequence>MGEQTEFEPIQLSPLDQAIPPVYIRILLCFSVVNVDRAISQLQTGVSSLLSALPFLSGDVVRYTAPGKTKWLYQLCPPTHQVQATGVLVVKHHQMRCMVDEKRFAPSSTSHIPLSPFAEPARPAPIFRVQANAYIDGITLGFAFHHIAVDATGMGVIISELARHCRSSPPPSLLCPDYERATRQLISNSRATECSGLDHSGDYISCQALSPPAEGSEDASPSIEISTETRTFVFPAARLESLKNACIEMLPTLDQQQRQQNPCLDEPARTKVPWLSTNDVFVALLWVCLTRCRYQEDQNSGLPSDEHTRICMGVNMRSRIQPPLSADYLGNAILSLSFKLNVNVFRRTQVTNESIEGVDSKDIEHKQWLATICRVARNIRRGVNGMDDSYFRSVVSFLEDSSDCRLFDYARCDFCVPSWRHLCVYHADFGEMGRPKSLEVFDVPGDGSFCILPQHYGAAAPWELLLGLLKA</sequence>
<dbReference type="EC" id="2.3.1.-" evidence="2"/>
<dbReference type="EMBL" id="BA000051">
    <property type="protein sequence ID" value="BAE60007.1"/>
    <property type="molecule type" value="Genomic_DNA"/>
</dbReference>
<dbReference type="SMR" id="Q2UEK8"/>
<dbReference type="EnsemblFungi" id="BAE60007">
    <property type="protein sequence ID" value="BAE60007"/>
    <property type="gene ID" value="AO090026000578"/>
</dbReference>
<dbReference type="VEuPathDB" id="FungiDB:AO090026000578"/>
<dbReference type="HOGENOM" id="CLU_026450_1_1_1"/>
<dbReference type="OMA" id="DEHTRIC"/>
<dbReference type="UniPathway" id="UPA00213"/>
<dbReference type="Proteomes" id="UP000006564">
    <property type="component" value="Chromosome 3"/>
</dbReference>
<dbReference type="GO" id="GO:0016747">
    <property type="term" value="F:acyltransferase activity, transferring groups other than amino-acyl groups"/>
    <property type="evidence" value="ECO:0007669"/>
    <property type="project" value="TreeGrafter"/>
</dbReference>
<dbReference type="GO" id="GO:0016114">
    <property type="term" value="P:terpenoid biosynthetic process"/>
    <property type="evidence" value="ECO:0007669"/>
    <property type="project" value="UniProtKB-UniPathway"/>
</dbReference>
<dbReference type="Gene3D" id="3.30.559.10">
    <property type="entry name" value="Chloramphenicol acetyltransferase-like domain"/>
    <property type="match status" value="2"/>
</dbReference>
<dbReference type="InterPro" id="IPR023213">
    <property type="entry name" value="CAT-like_dom_sf"/>
</dbReference>
<dbReference type="InterPro" id="IPR050317">
    <property type="entry name" value="Plant_Fungal_Acyltransferase"/>
</dbReference>
<dbReference type="PANTHER" id="PTHR31642:SF270">
    <property type="entry name" value="O-ACYLTRANSFERASE AUSQ"/>
    <property type="match status" value="1"/>
</dbReference>
<dbReference type="PANTHER" id="PTHR31642">
    <property type="entry name" value="TRICHOTHECENE 3-O-ACETYLTRANSFERASE"/>
    <property type="match status" value="1"/>
</dbReference>
<dbReference type="Pfam" id="PF02458">
    <property type="entry name" value="Transferase"/>
    <property type="match status" value="1"/>
</dbReference>
<name>ASTG_ASPOR</name>
<protein>
    <recommendedName>
        <fullName evidence="3">O-acetyltransferase astG</fullName>
        <ecNumber evidence="2">2.3.1.-</ecNumber>
    </recommendedName>
    <alternativeName>
        <fullName evidence="3">Astellolide biosynthesis cluster protein G</fullName>
    </alternativeName>
</protein>
<proteinExistence type="evidence at transcript level"/>
<accession>Q2UEK8</accession>
<feature type="chain" id="PRO_0000450121" description="O-acetyltransferase astG">
    <location>
        <begin position="1"/>
        <end position="471"/>
    </location>
</feature>
<reference key="1">
    <citation type="journal article" date="2005" name="Nature">
        <title>Genome sequencing and analysis of Aspergillus oryzae.</title>
        <authorList>
            <person name="Machida M."/>
            <person name="Asai K."/>
            <person name="Sano M."/>
            <person name="Tanaka T."/>
            <person name="Kumagai T."/>
            <person name="Terai G."/>
            <person name="Kusumoto K."/>
            <person name="Arima T."/>
            <person name="Akita O."/>
            <person name="Kashiwagi Y."/>
            <person name="Abe K."/>
            <person name="Gomi K."/>
            <person name="Horiuchi H."/>
            <person name="Kitamoto K."/>
            <person name="Kobayashi T."/>
            <person name="Takeuchi M."/>
            <person name="Denning D.W."/>
            <person name="Galagan J.E."/>
            <person name="Nierman W.C."/>
            <person name="Yu J."/>
            <person name="Archer D.B."/>
            <person name="Bennett J.W."/>
            <person name="Bhatnagar D."/>
            <person name="Cleveland T.E."/>
            <person name="Fedorova N.D."/>
            <person name="Gotoh O."/>
            <person name="Horikawa H."/>
            <person name="Hosoyama A."/>
            <person name="Ichinomiya M."/>
            <person name="Igarashi R."/>
            <person name="Iwashita K."/>
            <person name="Juvvadi P.R."/>
            <person name="Kato M."/>
            <person name="Kato Y."/>
            <person name="Kin T."/>
            <person name="Kokubun A."/>
            <person name="Maeda H."/>
            <person name="Maeyama N."/>
            <person name="Maruyama J."/>
            <person name="Nagasaki H."/>
            <person name="Nakajima T."/>
            <person name="Oda K."/>
            <person name="Okada K."/>
            <person name="Paulsen I."/>
            <person name="Sakamoto K."/>
            <person name="Sawano T."/>
            <person name="Takahashi M."/>
            <person name="Takase K."/>
            <person name="Terabayashi Y."/>
            <person name="Wortman J.R."/>
            <person name="Yamada O."/>
            <person name="Yamagata Y."/>
            <person name="Anazawa H."/>
            <person name="Hata Y."/>
            <person name="Koide Y."/>
            <person name="Komori T."/>
            <person name="Koyama Y."/>
            <person name="Minetoki T."/>
            <person name="Suharnan S."/>
            <person name="Tanaka A."/>
            <person name="Isono K."/>
            <person name="Kuhara S."/>
            <person name="Ogasawara N."/>
            <person name="Kikuchi H."/>
        </authorList>
    </citation>
    <scope>NUCLEOTIDE SEQUENCE [LARGE SCALE GENOMIC DNA]</scope>
    <source>
        <strain>ATCC 42149 / RIB 40</strain>
    </source>
</reference>
<reference key="2">
    <citation type="journal article" date="2016" name="Sci. Rep.">
        <title>Identification of a novel sesquiterpene biosynthetic machinery involved in astellolide biosynthesis.</title>
        <authorList>
            <person name="Shinohara Y."/>
            <person name="Takahashi S."/>
            <person name="Osada H."/>
            <person name="Koyama Y."/>
        </authorList>
    </citation>
    <scope>INDUCTION</scope>
    <scope>FUNCTION</scope>
    <scope>DISRUPTION PHENOTYPE</scope>
    <scope>PATHWAY</scope>
</reference>